<sequence>MVTGDKESSLMKKRNKRSHKRKREEDFERIDSLPWSSSIPIGEDDEGESFSTLFSGSGQLDGGFLSLEEIDEADYHLTLPTIESEITERKQSPEDDDDTNETVDEMIEGEEAEEDGEGRDDEDDEDDEETRKKKEKKAKRNKEKKKEKKKKKQKKINEAAKNQDASAVSCDGDDTVEEQVEEEEIPPEFSAWSSMRLHPLLMKSIYRLDFKEPTKIQKACFNVAAYQGKDVIGAAETGSGKTLAFGLPILQRLLDEREKVGKLYALKGEEAQKYAADGYLRALIITPTRELALQVTEHLENAAKNLSVKVVPIVGGMFSEKQERRLKEKPEIVVATPGRLWELMSAGEKHLVELHSLSFFVLDEADRMVERGHFRELQSILDLLPVTDKPNEGKTQTVKSNDTVLNVPKKKRQTFVFSATIALSSDFRKKLKRGSSKSKQSSSGEVNSIEVLSERAGMRDNVAIIDLTTTSILAPKIEESFIKCEEKEKDAYLYYILSVHGQGRTIVFCTSVTDLRHISGLLKILGLDVCTLFSEMKQRARLKSIDRFRASENGILIATDLVARGIDIKNVRTIIHYKLPHSAEVYVHRCGRTARAFADGCSIALIEPNETSKFYTLCKSFSMESVKIFPLDNSYMPAVRKRLYLARQIYEIERKGSRENADRTWLKKHAESMELELDDEESEEERVDNVRQRKATSARLNKLKEELSTLLSHPMQPKKFSGRYFAGVGVSTLMQNQFVELKKQKQAQMQIGGDIKRRKLVVINQNCIEPLQALRAGGNEMLKMKGQSAEKRRDIASLKKKRKEEKIGRRDQRRNQKKQRKLMASS</sequence>
<name>RH13_ARATH</name>
<evidence type="ECO:0000255" key="1"/>
<evidence type="ECO:0000255" key="2">
    <source>
        <dbReference type="PROSITE-ProRule" id="PRU00541"/>
    </source>
</evidence>
<evidence type="ECO:0000255" key="3">
    <source>
        <dbReference type="PROSITE-ProRule" id="PRU00542"/>
    </source>
</evidence>
<evidence type="ECO:0000256" key="4">
    <source>
        <dbReference type="SAM" id="MobiDB-lite"/>
    </source>
</evidence>
<evidence type="ECO:0000305" key="5"/>
<comment type="catalytic activity">
    <reaction>
        <text>ATP + H2O = ADP + phosphate + H(+)</text>
        <dbReference type="Rhea" id="RHEA:13065"/>
        <dbReference type="ChEBI" id="CHEBI:15377"/>
        <dbReference type="ChEBI" id="CHEBI:15378"/>
        <dbReference type="ChEBI" id="CHEBI:30616"/>
        <dbReference type="ChEBI" id="CHEBI:43474"/>
        <dbReference type="ChEBI" id="CHEBI:456216"/>
        <dbReference type="EC" id="3.6.4.13"/>
    </reaction>
</comment>
<comment type="domain">
    <text>The Q motif is unique to and characteristic of the DEAD box family of RNA helicases and controls ATP binding and hydrolysis.</text>
</comment>
<comment type="similarity">
    <text evidence="5">Belongs to the DEAD box helicase family. DDX24/MAK5 subfamily.</text>
</comment>
<comment type="sequence caution" evidence="5">
    <conflict type="erroneous gene model prediction">
        <sequence resource="EMBL-CDS" id="BAA95778"/>
    </conflict>
</comment>
<comment type="sequence caution" evidence="5">
    <conflict type="frameshift">
        <sequence resource="EMBL-CDS" id="CAA09204"/>
    </conflict>
</comment>
<accession>Q93Y39</accession>
<accession>C0Z292</accession>
<accession>F4J3W8</accession>
<accession>Q94AW1</accession>
<accession>Q9LRY9</accession>
<accession>Q9ZS07</accession>
<proteinExistence type="evidence at transcript level"/>
<gene>
    <name type="primary">RH13</name>
    <name type="ordered locus">At3g16840</name>
    <name type="ORF">K20I9.7</name>
</gene>
<reference key="1">
    <citation type="journal article" date="2000" name="DNA Res.">
        <title>Structural analysis of Arabidopsis thaliana chromosome 3. I. Sequence features of the regions of 4,504,864 bp covered by sixty P1 and TAC clones.</title>
        <authorList>
            <person name="Sato S."/>
            <person name="Nakamura Y."/>
            <person name="Kaneko T."/>
            <person name="Katoh T."/>
            <person name="Asamizu E."/>
            <person name="Tabata S."/>
        </authorList>
    </citation>
    <scope>NUCLEOTIDE SEQUENCE [LARGE SCALE GENOMIC DNA]</scope>
    <source>
        <strain>cv. Columbia</strain>
    </source>
</reference>
<reference key="2">
    <citation type="journal article" date="2017" name="Plant J.">
        <title>Araport11: a complete reannotation of the Arabidopsis thaliana reference genome.</title>
        <authorList>
            <person name="Cheng C.Y."/>
            <person name="Krishnakumar V."/>
            <person name="Chan A.P."/>
            <person name="Thibaud-Nissen F."/>
            <person name="Schobel S."/>
            <person name="Town C.D."/>
        </authorList>
    </citation>
    <scope>GENOME REANNOTATION</scope>
    <source>
        <strain>cv. Columbia</strain>
    </source>
</reference>
<reference key="3">
    <citation type="journal article" date="2009" name="DNA Res.">
        <title>Analysis of multiple occurrences of alternative splicing events in Arabidopsis thaliana using novel sequenced full-length cDNAs.</title>
        <authorList>
            <person name="Iida K."/>
            <person name="Fukami-Kobayashi K."/>
            <person name="Toyoda A."/>
            <person name="Sakaki Y."/>
            <person name="Kobayashi M."/>
            <person name="Seki M."/>
            <person name="Shinozaki K."/>
        </authorList>
    </citation>
    <scope>NUCLEOTIDE SEQUENCE [LARGE SCALE MRNA]</scope>
    <source>
        <strain>cv. Columbia</strain>
        <tissue>Rosette leaf</tissue>
    </source>
</reference>
<reference key="4">
    <citation type="journal article" date="2003" name="Science">
        <title>Empirical analysis of transcriptional activity in the Arabidopsis genome.</title>
        <authorList>
            <person name="Yamada K."/>
            <person name="Lim J."/>
            <person name="Dale J.M."/>
            <person name="Chen H."/>
            <person name="Shinn P."/>
            <person name="Palm C.J."/>
            <person name="Southwick A.M."/>
            <person name="Wu H.C."/>
            <person name="Kim C.J."/>
            <person name="Nguyen M."/>
            <person name="Pham P.K."/>
            <person name="Cheuk R.F."/>
            <person name="Karlin-Newmann G."/>
            <person name="Liu S.X."/>
            <person name="Lam B."/>
            <person name="Sakano H."/>
            <person name="Wu T."/>
            <person name="Yu G."/>
            <person name="Miranda M."/>
            <person name="Quach H.L."/>
            <person name="Tripp M."/>
            <person name="Chang C.H."/>
            <person name="Lee J.M."/>
            <person name="Toriumi M.J."/>
            <person name="Chan M.M."/>
            <person name="Tang C.C."/>
            <person name="Onodera C.S."/>
            <person name="Deng J.M."/>
            <person name="Akiyama K."/>
            <person name="Ansari Y."/>
            <person name="Arakawa T."/>
            <person name="Banh J."/>
            <person name="Banno F."/>
            <person name="Bowser L."/>
            <person name="Brooks S.Y."/>
            <person name="Carninci P."/>
            <person name="Chao Q."/>
            <person name="Choy N."/>
            <person name="Enju A."/>
            <person name="Goldsmith A.D."/>
            <person name="Gurjal M."/>
            <person name="Hansen N.F."/>
            <person name="Hayashizaki Y."/>
            <person name="Johnson-Hopson C."/>
            <person name="Hsuan V.W."/>
            <person name="Iida K."/>
            <person name="Karnes M."/>
            <person name="Khan S."/>
            <person name="Koesema E."/>
            <person name="Ishida J."/>
            <person name="Jiang P.X."/>
            <person name="Jones T."/>
            <person name="Kawai J."/>
            <person name="Kamiya A."/>
            <person name="Meyers C."/>
            <person name="Nakajima M."/>
            <person name="Narusaka M."/>
            <person name="Seki M."/>
            <person name="Sakurai T."/>
            <person name="Satou M."/>
            <person name="Tamse R."/>
            <person name="Vaysberg M."/>
            <person name="Wallender E.K."/>
            <person name="Wong C."/>
            <person name="Yamamura Y."/>
            <person name="Yuan S."/>
            <person name="Shinozaki K."/>
            <person name="Davis R.W."/>
            <person name="Theologis A."/>
            <person name="Ecker J.R."/>
        </authorList>
    </citation>
    <scope>NUCLEOTIDE SEQUENCE [LARGE SCALE MRNA] OF 1-797</scope>
    <source>
        <strain>cv. Columbia</strain>
    </source>
</reference>
<reference key="5">
    <citation type="journal article" date="1999" name="Nucleic Acids Res.">
        <title>The DEAD box RNA helicase family in Arabidopsis thaliana.</title>
        <authorList>
            <person name="Aubourg S."/>
            <person name="Kreis M."/>
            <person name="Lecharny A."/>
        </authorList>
    </citation>
    <scope>NUCLEOTIDE SEQUENCE [MRNA] OF 331-802</scope>
    <source>
        <strain>cv. Columbia</strain>
    </source>
</reference>
<reference key="6">
    <citation type="journal article" date="2004" name="Plant Biotechnol. J.">
        <title>DEAD-box RNA helicases in Arabidopsis thaliana: establishing a link between quantitative expression, gene structure and evolution of a family of genes.</title>
        <authorList>
            <person name="Mingam A."/>
            <person name="Toffano-Nioche C."/>
            <person name="Brunaud V."/>
            <person name="Boudet N."/>
            <person name="Kreis M."/>
            <person name="Lecharny A."/>
        </authorList>
    </citation>
    <scope>GENE FAMILY</scope>
    <scope>NOMENCLATURE</scope>
</reference>
<reference key="7">
    <citation type="journal article" date="2013" name="PLoS ONE">
        <title>Genome-wide comparative in silico analysis of the RNA helicase gene family in Zea mays and Glycine max: a comparison with Arabidopsis and Oryza sativa.</title>
        <authorList>
            <person name="Xu R."/>
            <person name="Zhang S."/>
            <person name="Huang J."/>
            <person name="Zheng C."/>
        </authorList>
    </citation>
    <scope>GENE FAMILY</scope>
</reference>
<dbReference type="EC" id="3.6.4.13"/>
<dbReference type="EMBL" id="AB028608">
    <property type="protein sequence ID" value="BAA95778.1"/>
    <property type="status" value="ALT_SEQ"/>
    <property type="molecule type" value="Genomic_DNA"/>
</dbReference>
<dbReference type="EMBL" id="CP002686">
    <property type="protein sequence ID" value="AEE75872.1"/>
    <property type="molecule type" value="Genomic_DNA"/>
</dbReference>
<dbReference type="EMBL" id="AK318706">
    <property type="protein sequence ID" value="BAH56821.1"/>
    <property type="molecule type" value="mRNA"/>
</dbReference>
<dbReference type="EMBL" id="AY045669">
    <property type="protein sequence ID" value="AAK74027.1"/>
    <property type="molecule type" value="mRNA"/>
</dbReference>
<dbReference type="EMBL" id="AY054475">
    <property type="protein sequence ID" value="AAK96666.1"/>
    <property type="molecule type" value="mRNA"/>
</dbReference>
<dbReference type="EMBL" id="AJ010465">
    <property type="protein sequence ID" value="CAA09204.1"/>
    <property type="status" value="ALT_FRAME"/>
    <property type="molecule type" value="mRNA"/>
</dbReference>
<dbReference type="PIR" id="T51744">
    <property type="entry name" value="T51744"/>
</dbReference>
<dbReference type="RefSeq" id="NP_188307.3">
    <property type="nucleotide sequence ID" value="NM_112558.6"/>
</dbReference>
<dbReference type="SMR" id="Q93Y39"/>
<dbReference type="BioGRID" id="6271">
    <property type="interactions" value="1"/>
</dbReference>
<dbReference type="FunCoup" id="Q93Y39">
    <property type="interactions" value="4654"/>
</dbReference>
<dbReference type="STRING" id="3702.Q93Y39"/>
<dbReference type="iPTMnet" id="Q93Y39"/>
<dbReference type="PaxDb" id="3702-AT3G16840.1"/>
<dbReference type="EnsemblPlants" id="AT3G16840.1">
    <property type="protein sequence ID" value="AT3G16840.1"/>
    <property type="gene ID" value="AT3G16840"/>
</dbReference>
<dbReference type="GeneID" id="820937"/>
<dbReference type="Gramene" id="AT3G16840.1">
    <property type="protein sequence ID" value="AT3G16840.1"/>
    <property type="gene ID" value="AT3G16840"/>
</dbReference>
<dbReference type="KEGG" id="ath:AT3G16840"/>
<dbReference type="Araport" id="AT3G16840"/>
<dbReference type="TAIR" id="AT3G16840"/>
<dbReference type="eggNOG" id="KOG0347">
    <property type="taxonomic scope" value="Eukaryota"/>
</dbReference>
<dbReference type="HOGENOM" id="CLU_003041_13_0_1"/>
<dbReference type="InParanoid" id="Q93Y39"/>
<dbReference type="CD-CODE" id="4299E36E">
    <property type="entry name" value="Nucleolus"/>
</dbReference>
<dbReference type="PRO" id="PR:Q93Y39"/>
<dbReference type="Proteomes" id="UP000006548">
    <property type="component" value="Chromosome 3"/>
</dbReference>
<dbReference type="ExpressionAtlas" id="Q93Y39">
    <property type="expression patterns" value="baseline and differential"/>
</dbReference>
<dbReference type="GO" id="GO:0005524">
    <property type="term" value="F:ATP binding"/>
    <property type="evidence" value="ECO:0007669"/>
    <property type="project" value="UniProtKB-KW"/>
</dbReference>
<dbReference type="GO" id="GO:0016887">
    <property type="term" value="F:ATP hydrolysis activity"/>
    <property type="evidence" value="ECO:0007669"/>
    <property type="project" value="RHEA"/>
</dbReference>
<dbReference type="GO" id="GO:0003723">
    <property type="term" value="F:RNA binding"/>
    <property type="evidence" value="ECO:0007669"/>
    <property type="project" value="UniProtKB-KW"/>
</dbReference>
<dbReference type="GO" id="GO:0003724">
    <property type="term" value="F:RNA helicase activity"/>
    <property type="evidence" value="ECO:0007669"/>
    <property type="project" value="UniProtKB-EC"/>
</dbReference>
<dbReference type="CDD" id="cd17946">
    <property type="entry name" value="DEADc_DDX24"/>
    <property type="match status" value="1"/>
</dbReference>
<dbReference type="CDD" id="cd18787">
    <property type="entry name" value="SF2_C_DEAD"/>
    <property type="match status" value="1"/>
</dbReference>
<dbReference type="Gene3D" id="3.40.50.300">
    <property type="entry name" value="P-loop containing nucleotide triphosphate hydrolases"/>
    <property type="match status" value="2"/>
</dbReference>
<dbReference type="InterPro" id="IPR011545">
    <property type="entry name" value="DEAD/DEAH_box_helicase_dom"/>
</dbReference>
<dbReference type="InterPro" id="IPR050079">
    <property type="entry name" value="DEAD_box_RNA_helicase"/>
</dbReference>
<dbReference type="InterPro" id="IPR014001">
    <property type="entry name" value="Helicase_ATP-bd"/>
</dbReference>
<dbReference type="InterPro" id="IPR001650">
    <property type="entry name" value="Helicase_C-like"/>
</dbReference>
<dbReference type="InterPro" id="IPR027417">
    <property type="entry name" value="P-loop_NTPase"/>
</dbReference>
<dbReference type="InterPro" id="IPR000629">
    <property type="entry name" value="RNA-helicase_DEAD-box_CS"/>
</dbReference>
<dbReference type="InterPro" id="IPR014014">
    <property type="entry name" value="RNA_helicase_DEAD_Q_motif"/>
</dbReference>
<dbReference type="PANTHER" id="PTHR47959:SF1">
    <property type="entry name" value="ATP-DEPENDENT RNA HELICASE DBPA"/>
    <property type="match status" value="1"/>
</dbReference>
<dbReference type="PANTHER" id="PTHR47959">
    <property type="entry name" value="ATP-DEPENDENT RNA HELICASE RHLE-RELATED"/>
    <property type="match status" value="1"/>
</dbReference>
<dbReference type="Pfam" id="PF00270">
    <property type="entry name" value="DEAD"/>
    <property type="match status" value="1"/>
</dbReference>
<dbReference type="Pfam" id="PF00271">
    <property type="entry name" value="Helicase_C"/>
    <property type="match status" value="1"/>
</dbReference>
<dbReference type="SMART" id="SM00487">
    <property type="entry name" value="DEXDc"/>
    <property type="match status" value="1"/>
</dbReference>
<dbReference type="SMART" id="SM00490">
    <property type="entry name" value="HELICc"/>
    <property type="match status" value="1"/>
</dbReference>
<dbReference type="SUPFAM" id="SSF52540">
    <property type="entry name" value="P-loop containing nucleoside triphosphate hydrolases"/>
    <property type="match status" value="1"/>
</dbReference>
<dbReference type="PROSITE" id="PS00039">
    <property type="entry name" value="DEAD_ATP_HELICASE"/>
    <property type="match status" value="1"/>
</dbReference>
<dbReference type="PROSITE" id="PS51192">
    <property type="entry name" value="HELICASE_ATP_BIND_1"/>
    <property type="match status" value="1"/>
</dbReference>
<dbReference type="PROSITE" id="PS51194">
    <property type="entry name" value="HELICASE_CTER"/>
    <property type="match status" value="1"/>
</dbReference>
<dbReference type="PROSITE" id="PS51195">
    <property type="entry name" value="Q_MOTIF"/>
    <property type="match status" value="1"/>
</dbReference>
<keyword id="KW-0067">ATP-binding</keyword>
<keyword id="KW-0175">Coiled coil</keyword>
<keyword id="KW-0347">Helicase</keyword>
<keyword id="KW-0378">Hydrolase</keyword>
<keyword id="KW-0547">Nucleotide-binding</keyword>
<keyword id="KW-1185">Reference proteome</keyword>
<keyword id="KW-0694">RNA-binding</keyword>
<organism>
    <name type="scientific">Arabidopsis thaliana</name>
    <name type="common">Mouse-ear cress</name>
    <dbReference type="NCBI Taxonomy" id="3702"/>
    <lineage>
        <taxon>Eukaryota</taxon>
        <taxon>Viridiplantae</taxon>
        <taxon>Streptophyta</taxon>
        <taxon>Embryophyta</taxon>
        <taxon>Tracheophyta</taxon>
        <taxon>Spermatophyta</taxon>
        <taxon>Magnoliopsida</taxon>
        <taxon>eudicotyledons</taxon>
        <taxon>Gunneridae</taxon>
        <taxon>Pentapetalae</taxon>
        <taxon>rosids</taxon>
        <taxon>malvids</taxon>
        <taxon>Brassicales</taxon>
        <taxon>Brassicaceae</taxon>
        <taxon>Camelineae</taxon>
        <taxon>Arabidopsis</taxon>
    </lineage>
</organism>
<feature type="chain" id="PRO_0000239155" description="DEAD-box ATP-dependent RNA helicase 13">
    <location>
        <begin position="1"/>
        <end position="826"/>
    </location>
</feature>
<feature type="domain" description="Helicase ATP-binding" evidence="2">
    <location>
        <begin position="222"/>
        <end position="439"/>
    </location>
</feature>
<feature type="domain" description="Helicase C-terminal" evidence="3">
    <location>
        <begin position="476"/>
        <end position="644"/>
    </location>
</feature>
<feature type="region of interest" description="Disordered" evidence="4">
    <location>
        <begin position="1"/>
        <end position="62"/>
    </location>
</feature>
<feature type="region of interest" description="Disordered" evidence="4">
    <location>
        <begin position="76"/>
        <end position="175"/>
    </location>
</feature>
<feature type="region of interest" description="Disordered" evidence="4">
    <location>
        <begin position="783"/>
        <end position="826"/>
    </location>
</feature>
<feature type="coiled-coil region" evidence="1">
    <location>
        <begin position="125"/>
        <end position="166"/>
    </location>
</feature>
<feature type="coiled-coil region" evidence="1">
    <location>
        <begin position="666"/>
        <end position="712"/>
    </location>
</feature>
<feature type="coiled-coil region" evidence="1">
    <location>
        <begin position="783"/>
        <end position="810"/>
    </location>
</feature>
<feature type="short sequence motif" description="Q motif">
    <location>
        <begin position="190"/>
        <end position="218"/>
    </location>
</feature>
<feature type="short sequence motif" description="DEAD box">
    <location>
        <begin position="363"/>
        <end position="366"/>
    </location>
</feature>
<feature type="compositionally biased region" description="Basic and acidic residues" evidence="4">
    <location>
        <begin position="1"/>
        <end position="10"/>
    </location>
</feature>
<feature type="compositionally biased region" description="Basic residues" evidence="4">
    <location>
        <begin position="11"/>
        <end position="22"/>
    </location>
</feature>
<feature type="compositionally biased region" description="Polar residues" evidence="4">
    <location>
        <begin position="49"/>
        <end position="58"/>
    </location>
</feature>
<feature type="compositionally biased region" description="Acidic residues" evidence="4">
    <location>
        <begin position="94"/>
        <end position="128"/>
    </location>
</feature>
<feature type="compositionally biased region" description="Basic residues" evidence="4">
    <location>
        <begin position="133"/>
        <end position="154"/>
    </location>
</feature>
<feature type="compositionally biased region" description="Basic and acidic residues" evidence="4">
    <location>
        <begin position="788"/>
        <end position="797"/>
    </location>
</feature>
<feature type="compositionally biased region" description="Basic and acidic residues" evidence="4">
    <location>
        <begin position="804"/>
        <end position="814"/>
    </location>
</feature>
<feature type="compositionally biased region" description="Basic residues" evidence="4">
    <location>
        <begin position="815"/>
        <end position="826"/>
    </location>
</feature>
<feature type="binding site" evidence="2">
    <location>
        <begin position="235"/>
        <end position="242"/>
    </location>
    <ligand>
        <name>ATP</name>
        <dbReference type="ChEBI" id="CHEBI:30616"/>
    </ligand>
</feature>
<feature type="sequence conflict" description="In Ref. 3; BAH56821." evidence="5" ref="3">
    <original>S</original>
    <variation>SA</variation>
    <location>
        <position position="166"/>
    </location>
</feature>
<feature type="sequence conflict" description="In Ref. 3; BAH56821." evidence="5" ref="3">
    <original>K</original>
    <variation>R</variation>
    <location>
        <position position="389"/>
    </location>
</feature>
<feature type="sequence conflict" description="In Ref. 3; BAH56821." evidence="5" ref="3">
    <original>P</original>
    <variation>Q</variation>
    <location>
        <position position="580"/>
    </location>
</feature>
<feature type="sequence conflict" description="In Ref. 5; CAA09204." evidence="5" ref="5">
    <original>E</original>
    <variation>D</variation>
    <location>
        <position position="653"/>
    </location>
</feature>
<feature type="sequence conflict" description="In Ref. 5; CAA09204." evidence="5" ref="5">
    <original>R</original>
    <variation>K</variation>
    <location>
        <position position="802"/>
    </location>
</feature>
<protein>
    <recommendedName>
        <fullName>DEAD-box ATP-dependent RNA helicase 13</fullName>
        <ecNumber>3.6.4.13</ecNumber>
    </recommendedName>
</protein>